<keyword id="KW-0027">Amidation</keyword>
<keyword id="KW-0878">Amphibian defense peptide</keyword>
<keyword id="KW-0044">Antibiotic</keyword>
<keyword id="KW-0929">Antimicrobial</keyword>
<keyword id="KW-0165">Cleavage on pair of basic residues</keyword>
<keyword id="KW-0204">Cytolysis</keyword>
<keyword id="KW-0903">Direct protein sequencing</keyword>
<keyword id="KW-0295">Fungicide</keyword>
<keyword id="KW-0354">Hemolysis</keyword>
<keyword id="KW-1185">Reference proteome</keyword>
<keyword id="KW-0964">Secreted</keyword>
<keyword id="KW-0732">Signal</keyword>
<protein>
    <recommendedName>
        <fullName>PYLa/PGLa B</fullName>
    </recommendedName>
    <component>
        <recommendedName>
            <fullName evidence="9">PYLa</fullName>
        </recommendedName>
    </component>
    <component>
        <recommendedName>
            <fullName evidence="6 8">PGLa</fullName>
        </recommendedName>
    </component>
    <component>
        <recommendedName>
            <fullName evidence="7">PGLa-H</fullName>
        </recommendedName>
    </component>
</protein>
<name>PYLAB_XENLA</name>
<comment type="function">
    <text evidence="2 3">PGLa and PGLa-H display a broad-spectrum of antibacterial activity against a range of Gram-positive and Gram-negative bacteria. PGLa also displays antifungal activity against C.albicans ATCC 14053. PGLa-H shows moderate antibacterial activity against the multidrug-resistant methicillin-resistant S.aureus (MRSA) but exhibits very little hemolytic activity.</text>
</comment>
<comment type="subcellular location">
    <subcellularLocation>
        <location evidence="2 3 4 5">Secreted</location>
    </subcellularLocation>
</comment>
<comment type="tissue specificity">
    <text evidence="2 3">Expressed by the skin glands. Synthesized in the stomach and stored in a novel granular multinucleated cell in the gastric mucosa. Stored as active, processed peptides in large granules within the granular gland secretions of the skin.</text>
</comment>
<comment type="mass spectrometry" mass="1053.727" method="MALDI" evidence="3">
    <molecule>PGLa-H</molecule>
</comment>
<comment type="similarity">
    <text evidence="1">Belongs to the gastrin/cholecystokinin family. Magainin subfamily.</text>
</comment>
<organism>
    <name type="scientific">Xenopus laevis</name>
    <name type="common">African clawed frog</name>
    <dbReference type="NCBI Taxonomy" id="8355"/>
    <lineage>
        <taxon>Eukaryota</taxon>
        <taxon>Metazoa</taxon>
        <taxon>Chordata</taxon>
        <taxon>Craniata</taxon>
        <taxon>Vertebrata</taxon>
        <taxon>Euteleostomi</taxon>
        <taxon>Amphibia</taxon>
        <taxon>Batrachia</taxon>
        <taxon>Anura</taxon>
        <taxon>Pipoidea</taxon>
        <taxon>Pipidae</taxon>
        <taxon>Xenopodinae</taxon>
        <taxon>Xenopus</taxon>
        <taxon>Xenopus</taxon>
    </lineage>
</organism>
<sequence length="64" mass="6761">MYKQIFLCLIIAALCATIMAEASALADADDDDDKRYVRGMASKAGAIAGKIAKVALKALGRRDS</sequence>
<dbReference type="EMBL" id="M12498">
    <property type="protein sequence ID" value="AAA49940.1"/>
    <property type="molecule type" value="mRNA"/>
</dbReference>
<dbReference type="PIR" id="B26815">
    <property type="entry name" value="B26815"/>
</dbReference>
<dbReference type="RefSeq" id="NP_001081314.1">
    <property type="nucleotide sequence ID" value="NM_001087845.1"/>
</dbReference>
<dbReference type="GeneID" id="397770"/>
<dbReference type="KEGG" id="xla:397770"/>
<dbReference type="AGR" id="Xenbase:XB-GENE-6252595"/>
<dbReference type="CTD" id="397770"/>
<dbReference type="Xenbase" id="XB-GENE-6252595">
    <property type="gene designation" value="pgla.L"/>
</dbReference>
<dbReference type="Proteomes" id="UP000186698">
    <property type="component" value="Chromosome 6L"/>
</dbReference>
<dbReference type="Bgee" id="397770">
    <property type="expression patterns" value="Expressed in zone of skin and 13 other cell types or tissues"/>
</dbReference>
<dbReference type="GO" id="GO:0005576">
    <property type="term" value="C:extracellular region"/>
    <property type="evidence" value="ECO:0007669"/>
    <property type="project" value="UniProtKB-SubCell"/>
</dbReference>
<dbReference type="GO" id="GO:0042742">
    <property type="term" value="P:defense response to bacterium"/>
    <property type="evidence" value="ECO:0007669"/>
    <property type="project" value="UniProtKB-KW"/>
</dbReference>
<dbReference type="GO" id="GO:0050832">
    <property type="term" value="P:defense response to fungus"/>
    <property type="evidence" value="ECO:0007669"/>
    <property type="project" value="UniProtKB-KW"/>
</dbReference>
<dbReference type="GO" id="GO:0031640">
    <property type="term" value="P:killing of cells of another organism"/>
    <property type="evidence" value="ECO:0007669"/>
    <property type="project" value="UniProtKB-KW"/>
</dbReference>
<feature type="signal peptide" evidence="1 11">
    <location>
        <begin position="1"/>
        <end position="20"/>
    </location>
</feature>
<feature type="propeptide" id="PRO_0000415795" evidence="5">
    <location>
        <begin position="21"/>
        <end position="35"/>
    </location>
</feature>
<feature type="peptide" id="PRO_0000415796" description="PYLa" evidence="5">
    <location>
        <begin position="36"/>
        <end position="59"/>
    </location>
</feature>
<feature type="peptide" id="PRO_0000415797" description="PGLa" evidence="2 4">
    <location>
        <begin position="39"/>
        <end position="59"/>
    </location>
</feature>
<feature type="peptide" id="PRO_0000415798" description="PGLa-H" evidence="3">
    <location>
        <begin position="50"/>
        <end position="59"/>
    </location>
</feature>
<feature type="propeptide" id="PRO_0000415799" evidence="5">
    <location>
        <begin position="60"/>
        <end position="64"/>
    </location>
</feature>
<feature type="modified residue" description="Leucine amide" evidence="2 4">
    <location>
        <position position="59"/>
    </location>
</feature>
<evidence type="ECO:0000255" key="1"/>
<evidence type="ECO:0000269" key="2">
    <source>
    </source>
</evidence>
<evidence type="ECO:0000269" key="3">
    <source>
    </source>
</evidence>
<evidence type="ECO:0000269" key="4">
    <source>
    </source>
</evidence>
<evidence type="ECO:0000269" key="5">
    <source>
    </source>
</evidence>
<evidence type="ECO:0000303" key="6">
    <source>
    </source>
</evidence>
<evidence type="ECO:0000303" key="7">
    <source>
    </source>
</evidence>
<evidence type="ECO:0000303" key="8">
    <source>
    </source>
</evidence>
<evidence type="ECO:0000303" key="9">
    <source>
    </source>
</evidence>
<evidence type="ECO:0000305" key="10"/>
<evidence type="ECO:0000312" key="11">
    <source>
        <dbReference type="EMBL" id="AAA49940.1"/>
    </source>
</evidence>
<reference evidence="11" key="1">
    <citation type="journal article" date="1983" name="EMBO J.">
        <title>A novel peptide designated PYLa and its precursor as predicted from cloned mRNA of Xenopus laevis skin.</title>
        <authorList>
            <person name="Hoffmann W."/>
            <person name="Richter K."/>
            <person name="Kreil G."/>
        </authorList>
    </citation>
    <scope>NUCLEOTIDE SEQUENCE [MRNA]</scope>
    <scope>SUBCELLULAR LOCATION</scope>
    <source>
        <tissue evidence="5">Skin</tissue>
    </source>
</reference>
<reference evidence="10" key="2">
    <citation type="journal article" date="1987" name="Biochem. J.">
        <title>Biosynthesis and degradation of peptides derived from Xenopus laevis prohormones.</title>
        <authorList>
            <person name="Giovannini M.G."/>
            <person name="Poulter L."/>
            <person name="Gibson B.W."/>
            <person name="Williams D.H."/>
        </authorList>
    </citation>
    <scope>PROTEIN SEQUENCE OF 39-59</scope>
    <scope>SUBCELLULAR LOCATION</scope>
    <scope>AMIDATION AT LEU-59</scope>
    <source>
        <tissue evidence="4">Skin secretion</tissue>
    </source>
</reference>
<reference evidence="10" key="3">
    <citation type="journal article" date="1991" name="J. Biol. Chem.">
        <title>Antimicrobial peptides in the stomach of Xenopus laevis.</title>
        <authorList>
            <person name="Moore K.S."/>
            <person name="Bevins C.L."/>
            <person name="Brasseur M.M."/>
            <person name="Tomassini N."/>
            <person name="Turner K."/>
            <person name="Eck H."/>
            <person name="Zasloff M."/>
        </authorList>
    </citation>
    <scope>PROTEIN SEQUENCE OF 39-59</scope>
    <scope>FUNCTION</scope>
    <scope>SUBCELLULAR LOCATION</scope>
    <scope>TISSUE SPECIFICITY</scope>
    <scope>AMIDATION AT LEU-59</scope>
    <source>
        <tissue evidence="2">Stomach</tissue>
    </source>
</reference>
<reference evidence="10" key="4">
    <citation type="journal article" date="2011" name="Int. J. Antimicrob. Agents">
        <title>Isolation and characterisation of a new antimicrobial peptide from the skin of Xenopus laevis.</title>
        <authorList>
            <person name="Hou F."/>
            <person name="Li J."/>
            <person name="Pan P."/>
            <person name="Xu J."/>
            <person name="Liu L."/>
            <person name="Liu W."/>
            <person name="Song B."/>
            <person name="Li N."/>
            <person name="Wan J."/>
            <person name="Gao H."/>
        </authorList>
    </citation>
    <scope>PROTEIN SEQUENCE OF 50-59</scope>
    <scope>FUNCTION</scope>
    <scope>SUBCELLULAR LOCATION</scope>
    <scope>TISSUE SPECIFICITY</scope>
    <scope>MASS SPECTROMETRY</scope>
    <source>
        <tissue evidence="3">Skin secretion</tissue>
    </source>
</reference>
<gene>
    <name type="primary">pgla-b</name>
    <name evidence="11" type="synonym">pyla</name>
</gene>
<accession>Q91826</accession>
<proteinExistence type="evidence at protein level"/>